<dbReference type="EMBL" id="CP000949">
    <property type="protein sequence ID" value="ACA75164.1"/>
    <property type="molecule type" value="Genomic_DNA"/>
</dbReference>
<dbReference type="SMR" id="B1JAD6"/>
<dbReference type="STRING" id="390235.PputW619_4687"/>
<dbReference type="KEGG" id="ppw:PputW619_4687"/>
<dbReference type="eggNOG" id="COG0323">
    <property type="taxonomic scope" value="Bacteria"/>
</dbReference>
<dbReference type="HOGENOM" id="CLU_004131_4_2_6"/>
<dbReference type="OrthoDB" id="9763467at2"/>
<dbReference type="GO" id="GO:0032300">
    <property type="term" value="C:mismatch repair complex"/>
    <property type="evidence" value="ECO:0007669"/>
    <property type="project" value="InterPro"/>
</dbReference>
<dbReference type="GO" id="GO:0005524">
    <property type="term" value="F:ATP binding"/>
    <property type="evidence" value="ECO:0007669"/>
    <property type="project" value="InterPro"/>
</dbReference>
<dbReference type="GO" id="GO:0016887">
    <property type="term" value="F:ATP hydrolysis activity"/>
    <property type="evidence" value="ECO:0007669"/>
    <property type="project" value="InterPro"/>
</dbReference>
<dbReference type="GO" id="GO:0140664">
    <property type="term" value="F:ATP-dependent DNA damage sensor activity"/>
    <property type="evidence" value="ECO:0007669"/>
    <property type="project" value="InterPro"/>
</dbReference>
<dbReference type="GO" id="GO:0030983">
    <property type="term" value="F:mismatched DNA binding"/>
    <property type="evidence" value="ECO:0007669"/>
    <property type="project" value="InterPro"/>
</dbReference>
<dbReference type="GO" id="GO:0006298">
    <property type="term" value="P:mismatch repair"/>
    <property type="evidence" value="ECO:0007669"/>
    <property type="project" value="UniProtKB-UniRule"/>
</dbReference>
<dbReference type="CDD" id="cd16926">
    <property type="entry name" value="HATPase_MutL-MLH-PMS-like"/>
    <property type="match status" value="1"/>
</dbReference>
<dbReference type="CDD" id="cd03482">
    <property type="entry name" value="MutL_Trans_MutL"/>
    <property type="match status" value="1"/>
</dbReference>
<dbReference type="FunFam" id="3.30.230.10:FF:000013">
    <property type="entry name" value="DNA mismatch repair endonuclease MutL"/>
    <property type="match status" value="1"/>
</dbReference>
<dbReference type="FunFam" id="3.30.565.10:FF:000003">
    <property type="entry name" value="DNA mismatch repair endonuclease MutL"/>
    <property type="match status" value="1"/>
</dbReference>
<dbReference type="FunFam" id="3.30.1370.100:FF:000005">
    <property type="entry name" value="DNA mismatch repair protein MutL"/>
    <property type="match status" value="1"/>
</dbReference>
<dbReference type="Gene3D" id="3.30.230.10">
    <property type="match status" value="1"/>
</dbReference>
<dbReference type="Gene3D" id="3.30.565.10">
    <property type="entry name" value="Histidine kinase-like ATPase, C-terminal domain"/>
    <property type="match status" value="1"/>
</dbReference>
<dbReference type="Gene3D" id="3.30.1540.20">
    <property type="entry name" value="MutL, C-terminal domain, dimerisation subdomain"/>
    <property type="match status" value="1"/>
</dbReference>
<dbReference type="Gene3D" id="3.30.1370.100">
    <property type="entry name" value="MutL, C-terminal domain, regulatory subdomain"/>
    <property type="match status" value="1"/>
</dbReference>
<dbReference type="HAMAP" id="MF_00149">
    <property type="entry name" value="DNA_mis_repair"/>
    <property type="match status" value="1"/>
</dbReference>
<dbReference type="InterPro" id="IPR014762">
    <property type="entry name" value="DNA_mismatch_repair_CS"/>
</dbReference>
<dbReference type="InterPro" id="IPR020667">
    <property type="entry name" value="DNA_mismatch_repair_MutL"/>
</dbReference>
<dbReference type="InterPro" id="IPR013507">
    <property type="entry name" value="DNA_mismatch_S5_2-like"/>
</dbReference>
<dbReference type="InterPro" id="IPR036890">
    <property type="entry name" value="HATPase_C_sf"/>
</dbReference>
<dbReference type="InterPro" id="IPR002099">
    <property type="entry name" value="MutL/Mlh/PMS"/>
</dbReference>
<dbReference type="InterPro" id="IPR038973">
    <property type="entry name" value="MutL/Mlh/Pms-like"/>
</dbReference>
<dbReference type="InterPro" id="IPR014790">
    <property type="entry name" value="MutL_C"/>
</dbReference>
<dbReference type="InterPro" id="IPR042120">
    <property type="entry name" value="MutL_C_dimsub"/>
</dbReference>
<dbReference type="InterPro" id="IPR042121">
    <property type="entry name" value="MutL_C_regsub"/>
</dbReference>
<dbReference type="InterPro" id="IPR037198">
    <property type="entry name" value="MutL_C_sf"/>
</dbReference>
<dbReference type="InterPro" id="IPR020568">
    <property type="entry name" value="Ribosomal_Su5_D2-typ_SF"/>
</dbReference>
<dbReference type="InterPro" id="IPR014721">
    <property type="entry name" value="Ribsml_uS5_D2-typ_fold_subgr"/>
</dbReference>
<dbReference type="NCBIfam" id="TIGR00585">
    <property type="entry name" value="mutl"/>
    <property type="match status" value="1"/>
</dbReference>
<dbReference type="NCBIfam" id="NF000949">
    <property type="entry name" value="PRK00095.1-2"/>
    <property type="match status" value="1"/>
</dbReference>
<dbReference type="PANTHER" id="PTHR10073">
    <property type="entry name" value="DNA MISMATCH REPAIR PROTEIN MLH, PMS, MUTL"/>
    <property type="match status" value="1"/>
</dbReference>
<dbReference type="PANTHER" id="PTHR10073:SF12">
    <property type="entry name" value="DNA MISMATCH REPAIR PROTEIN MLH1"/>
    <property type="match status" value="1"/>
</dbReference>
<dbReference type="Pfam" id="PF01119">
    <property type="entry name" value="DNA_mis_repair"/>
    <property type="match status" value="1"/>
</dbReference>
<dbReference type="Pfam" id="PF13589">
    <property type="entry name" value="HATPase_c_3"/>
    <property type="match status" value="1"/>
</dbReference>
<dbReference type="Pfam" id="PF08676">
    <property type="entry name" value="MutL_C"/>
    <property type="match status" value="1"/>
</dbReference>
<dbReference type="SMART" id="SM01340">
    <property type="entry name" value="DNA_mis_repair"/>
    <property type="match status" value="1"/>
</dbReference>
<dbReference type="SMART" id="SM00853">
    <property type="entry name" value="MutL_C"/>
    <property type="match status" value="1"/>
</dbReference>
<dbReference type="SUPFAM" id="SSF55874">
    <property type="entry name" value="ATPase domain of HSP90 chaperone/DNA topoisomerase II/histidine kinase"/>
    <property type="match status" value="1"/>
</dbReference>
<dbReference type="SUPFAM" id="SSF118116">
    <property type="entry name" value="DNA mismatch repair protein MutL"/>
    <property type="match status" value="1"/>
</dbReference>
<dbReference type="SUPFAM" id="SSF54211">
    <property type="entry name" value="Ribosomal protein S5 domain 2-like"/>
    <property type="match status" value="1"/>
</dbReference>
<dbReference type="PROSITE" id="PS00058">
    <property type="entry name" value="DNA_MISMATCH_REPAIR_1"/>
    <property type="match status" value="1"/>
</dbReference>
<gene>
    <name evidence="1" type="primary">mutL</name>
    <name type="ordered locus">PputW619_4687</name>
</gene>
<name>MUTL_PSEPW</name>
<comment type="function">
    <text evidence="1">This protein is involved in the repair of mismatches in DNA. It is required for dam-dependent methyl-directed DNA mismatch repair. May act as a 'molecular matchmaker', a protein that promotes the formation of a stable complex between two or more DNA-binding proteins in an ATP-dependent manner without itself being part of a final effector complex.</text>
</comment>
<comment type="similarity">
    <text evidence="1">Belongs to the DNA mismatch repair MutL/HexB family.</text>
</comment>
<accession>B1JAD6</accession>
<protein>
    <recommendedName>
        <fullName evidence="1">DNA mismatch repair protein MutL</fullName>
    </recommendedName>
</protein>
<sequence>MSGGSRIQLLSPRLTNQIAAGEVVERPASVAKELLENSLDSGARRIDVEVEQGGVKLLRVRDDGSGISADDLPLALARHATSKIRELEDLEGVLSLGFRGEALASISSVARLTLTSRTASASEAWQVETEGRDMTPRVQPAAHPVGTSVEVRDLFFNTPARRKFLKAEKTEFDHLQEVIRRLALARFDVAFHLRHNGKSILSLHEAHDETARARRVGAICGGGFMEQALPIDVERNGLRLWGWVGLPTFSRSQADLQYFFVNGRAVRDKLVAHAVRQAYRDVLFNGRHPTFVLFLELEPNGVDVNVHPTKHEVRFREGRSVHDFLYGTLHRALADVRPEDHLASAPAAAAEITRPTGQQAGEFGPQGEMRLASPVLEQPQVPQHSISNGGSGAGYQYQYTPRPSQPLPAAEAQAVYREFYKPLNDDAAGPATLPQSQGDIPPLGYALAQLKGIYILAENAAGLVLVDMHAAHERIMYERLKVAMASEGLSGQPLLVPESLALSQREADCAEEHAQWFQRLGFELQRLGPETLAIRQIPALLKQAEANRLVQDVLADLMEYGTSDRIQAHLNELLGTMACHGAVRANRRLAIPEMNALLRDMENTERSGQCNHGRPTWTQMGLDDLDKLFLRGR</sequence>
<evidence type="ECO:0000255" key="1">
    <source>
        <dbReference type="HAMAP-Rule" id="MF_00149"/>
    </source>
</evidence>
<reference key="1">
    <citation type="submission" date="2008-02" db="EMBL/GenBank/DDBJ databases">
        <title>Complete sequence of Pseudomonas putida W619.</title>
        <authorList>
            <person name="Copeland A."/>
            <person name="Lucas S."/>
            <person name="Lapidus A."/>
            <person name="Barry K."/>
            <person name="Detter J.C."/>
            <person name="Glavina del Rio T."/>
            <person name="Dalin E."/>
            <person name="Tice H."/>
            <person name="Pitluck S."/>
            <person name="Chain P."/>
            <person name="Malfatti S."/>
            <person name="Shin M."/>
            <person name="Vergez L."/>
            <person name="Schmutz J."/>
            <person name="Larimer F."/>
            <person name="Land M."/>
            <person name="Hauser L."/>
            <person name="Kyrpides N."/>
            <person name="Kim E."/>
            <person name="Taghavi S."/>
            <person name="Vangronsveld D."/>
            <person name="van der Lelie D."/>
            <person name="Richardson P."/>
        </authorList>
    </citation>
    <scope>NUCLEOTIDE SEQUENCE [LARGE SCALE GENOMIC DNA]</scope>
    <source>
        <strain>W619</strain>
    </source>
</reference>
<feature type="chain" id="PRO_1000096675" description="DNA mismatch repair protein MutL">
    <location>
        <begin position="1"/>
        <end position="633"/>
    </location>
</feature>
<proteinExistence type="inferred from homology"/>
<keyword id="KW-0227">DNA damage</keyword>
<keyword id="KW-0234">DNA repair</keyword>
<organism>
    <name type="scientific">Pseudomonas putida (strain W619)</name>
    <dbReference type="NCBI Taxonomy" id="390235"/>
    <lineage>
        <taxon>Bacteria</taxon>
        <taxon>Pseudomonadati</taxon>
        <taxon>Pseudomonadota</taxon>
        <taxon>Gammaproteobacteria</taxon>
        <taxon>Pseudomonadales</taxon>
        <taxon>Pseudomonadaceae</taxon>
        <taxon>Pseudomonas</taxon>
    </lineage>
</organism>